<proteinExistence type="evidence at protein level"/>
<dbReference type="EC" id="3.5.4.26"/>
<dbReference type="EC" id="1.1.1.193"/>
<dbReference type="EMBL" id="X51510">
    <property type="protein sequence ID" value="CAA35878.1"/>
    <property type="molecule type" value="Genomic_DNA"/>
</dbReference>
<dbReference type="EMBL" id="L09228">
    <property type="protein sequence ID" value="AAA67481.1"/>
    <property type="molecule type" value="Genomic_DNA"/>
</dbReference>
<dbReference type="EMBL" id="AL009126">
    <property type="protein sequence ID" value="CAB14260.1"/>
    <property type="molecule type" value="Genomic_DNA"/>
</dbReference>
<dbReference type="PIR" id="S45543">
    <property type="entry name" value="PN0100"/>
</dbReference>
<dbReference type="RefSeq" id="NP_390209.1">
    <property type="nucleotide sequence ID" value="NC_000964.3"/>
</dbReference>
<dbReference type="RefSeq" id="WP_004398763.1">
    <property type="nucleotide sequence ID" value="NZ_OZ025638.1"/>
</dbReference>
<dbReference type="PDB" id="2B3Z">
    <property type="method" value="X-ray"/>
    <property type="resolution" value="2.41 A"/>
    <property type="chains" value="A/B/C/D=1-361"/>
</dbReference>
<dbReference type="PDB" id="2D5N">
    <property type="method" value="X-ray"/>
    <property type="resolution" value="2.97 A"/>
    <property type="chains" value="A/B/C/D=1-361"/>
</dbReference>
<dbReference type="PDB" id="3EX8">
    <property type="method" value="X-ray"/>
    <property type="resolution" value="2.56 A"/>
    <property type="chains" value="A/B/C/D=1-361"/>
</dbReference>
<dbReference type="PDB" id="4G3M">
    <property type="method" value="X-ray"/>
    <property type="resolution" value="2.56 A"/>
    <property type="chains" value="A/B/C/D=1-361"/>
</dbReference>
<dbReference type="PDBsum" id="2B3Z"/>
<dbReference type="PDBsum" id="2D5N"/>
<dbReference type="PDBsum" id="3EX8"/>
<dbReference type="PDBsum" id="4G3M"/>
<dbReference type="SMR" id="P17618"/>
<dbReference type="BioGRID" id="856545">
    <property type="interactions" value="1"/>
</dbReference>
<dbReference type="FunCoup" id="P17618">
    <property type="interactions" value="641"/>
</dbReference>
<dbReference type="STRING" id="224308.BSU23280"/>
<dbReference type="MoonProt" id="P17618"/>
<dbReference type="PaxDb" id="224308-BSU23280"/>
<dbReference type="EnsemblBacteria" id="CAB14260">
    <property type="protein sequence ID" value="CAB14260"/>
    <property type="gene ID" value="BSU_23280"/>
</dbReference>
<dbReference type="GeneID" id="938945"/>
<dbReference type="KEGG" id="bsu:BSU23280"/>
<dbReference type="PATRIC" id="fig|224308.179.peg.2535"/>
<dbReference type="eggNOG" id="COG0117">
    <property type="taxonomic scope" value="Bacteria"/>
</dbReference>
<dbReference type="eggNOG" id="COG1985">
    <property type="taxonomic scope" value="Bacteria"/>
</dbReference>
<dbReference type="InParanoid" id="P17618"/>
<dbReference type="OrthoDB" id="9800865at2"/>
<dbReference type="PhylomeDB" id="P17618"/>
<dbReference type="BioCyc" id="BSUB:BSU23280-MONOMER"/>
<dbReference type="BRENDA" id="1.1.1.193">
    <property type="organism ID" value="658"/>
</dbReference>
<dbReference type="BRENDA" id="3.5.4.26">
    <property type="organism ID" value="658"/>
</dbReference>
<dbReference type="UniPathway" id="UPA00275">
    <property type="reaction ID" value="UER00401"/>
</dbReference>
<dbReference type="UniPathway" id="UPA00275">
    <property type="reaction ID" value="UER00402"/>
</dbReference>
<dbReference type="EvolutionaryTrace" id="P17618"/>
<dbReference type="Proteomes" id="UP000001570">
    <property type="component" value="Chromosome"/>
</dbReference>
<dbReference type="GO" id="GO:0008703">
    <property type="term" value="F:5-amino-6-(5-phosphoribosylamino)uracil reductase activity"/>
    <property type="evidence" value="ECO:0007669"/>
    <property type="project" value="UniProtKB-EC"/>
</dbReference>
<dbReference type="GO" id="GO:0008835">
    <property type="term" value="F:diaminohydroxyphosphoribosylaminopyrimidine deaminase activity"/>
    <property type="evidence" value="ECO:0000318"/>
    <property type="project" value="GO_Central"/>
</dbReference>
<dbReference type="GO" id="GO:0050661">
    <property type="term" value="F:NADP binding"/>
    <property type="evidence" value="ECO:0007669"/>
    <property type="project" value="InterPro"/>
</dbReference>
<dbReference type="GO" id="GO:0008270">
    <property type="term" value="F:zinc ion binding"/>
    <property type="evidence" value="ECO:0007669"/>
    <property type="project" value="InterPro"/>
</dbReference>
<dbReference type="GO" id="GO:0009231">
    <property type="term" value="P:riboflavin biosynthetic process"/>
    <property type="evidence" value="ECO:0007669"/>
    <property type="project" value="UniProtKB-UniPathway"/>
</dbReference>
<dbReference type="CDD" id="cd01284">
    <property type="entry name" value="Riboflavin_deaminase-reductase"/>
    <property type="match status" value="1"/>
</dbReference>
<dbReference type="FunFam" id="3.40.140.10:FF:000025">
    <property type="entry name" value="Riboflavin biosynthesis protein RibD"/>
    <property type="match status" value="1"/>
</dbReference>
<dbReference type="Gene3D" id="3.40.140.10">
    <property type="entry name" value="Cytidine Deaminase, domain 2"/>
    <property type="match status" value="1"/>
</dbReference>
<dbReference type="Gene3D" id="3.40.430.10">
    <property type="entry name" value="Dihydrofolate Reductase, subunit A"/>
    <property type="match status" value="1"/>
</dbReference>
<dbReference type="InterPro" id="IPR016192">
    <property type="entry name" value="APOBEC/CMP_deaminase_Zn-bd"/>
</dbReference>
<dbReference type="InterPro" id="IPR002125">
    <property type="entry name" value="CMP_dCMP_dom"/>
</dbReference>
<dbReference type="InterPro" id="IPR016193">
    <property type="entry name" value="Cytidine_deaminase-like"/>
</dbReference>
<dbReference type="InterPro" id="IPR024072">
    <property type="entry name" value="DHFR-like_dom_sf"/>
</dbReference>
<dbReference type="InterPro" id="IPR004794">
    <property type="entry name" value="Eubact_RibD"/>
</dbReference>
<dbReference type="InterPro" id="IPR011549">
    <property type="entry name" value="RibD_C"/>
</dbReference>
<dbReference type="InterPro" id="IPR002734">
    <property type="entry name" value="RibDG_C"/>
</dbReference>
<dbReference type="InterPro" id="IPR050765">
    <property type="entry name" value="Riboflavin_Biosynth_HTPR"/>
</dbReference>
<dbReference type="NCBIfam" id="TIGR00326">
    <property type="entry name" value="eubact_ribD"/>
    <property type="match status" value="1"/>
</dbReference>
<dbReference type="NCBIfam" id="TIGR00227">
    <property type="entry name" value="ribD_Cterm"/>
    <property type="match status" value="1"/>
</dbReference>
<dbReference type="PANTHER" id="PTHR38011:SF7">
    <property type="entry name" value="2,5-DIAMINO-6-RIBOSYLAMINO-4(3H)-PYRIMIDINONE 5'-PHOSPHATE REDUCTASE"/>
    <property type="match status" value="1"/>
</dbReference>
<dbReference type="PANTHER" id="PTHR38011">
    <property type="entry name" value="DIHYDROFOLATE REDUCTASE FAMILY PROTEIN (AFU_ORTHOLOGUE AFUA_8G06820)"/>
    <property type="match status" value="1"/>
</dbReference>
<dbReference type="Pfam" id="PF00383">
    <property type="entry name" value="dCMP_cyt_deam_1"/>
    <property type="match status" value="1"/>
</dbReference>
<dbReference type="Pfam" id="PF01872">
    <property type="entry name" value="RibD_C"/>
    <property type="match status" value="1"/>
</dbReference>
<dbReference type="PIRSF" id="PIRSF006769">
    <property type="entry name" value="RibD"/>
    <property type="match status" value="1"/>
</dbReference>
<dbReference type="SUPFAM" id="SSF53927">
    <property type="entry name" value="Cytidine deaminase-like"/>
    <property type="match status" value="1"/>
</dbReference>
<dbReference type="SUPFAM" id="SSF53597">
    <property type="entry name" value="Dihydrofolate reductase-like"/>
    <property type="match status" value="1"/>
</dbReference>
<dbReference type="PROSITE" id="PS00903">
    <property type="entry name" value="CYT_DCMP_DEAMINASES_1"/>
    <property type="match status" value="1"/>
</dbReference>
<dbReference type="PROSITE" id="PS51747">
    <property type="entry name" value="CYT_DCMP_DEAMINASES_2"/>
    <property type="match status" value="1"/>
</dbReference>
<gene>
    <name type="primary">ribD</name>
    <name type="synonym">ribG</name>
    <name type="ordered locus">BSU23280</name>
</gene>
<organism>
    <name type="scientific">Bacillus subtilis (strain 168)</name>
    <dbReference type="NCBI Taxonomy" id="224308"/>
    <lineage>
        <taxon>Bacteria</taxon>
        <taxon>Bacillati</taxon>
        <taxon>Bacillota</taxon>
        <taxon>Bacilli</taxon>
        <taxon>Bacillales</taxon>
        <taxon>Bacillaceae</taxon>
        <taxon>Bacillus</taxon>
    </lineage>
</organism>
<reference key="1">
    <citation type="thesis" date="1989" institute="USSR Academy of Sciences" country="Russia">
        <authorList>
            <person name="Mironov V.N."/>
        </authorList>
    </citation>
    <scope>NUCLEOTIDE SEQUENCE [GENOMIC DNA]</scope>
    <source>
        <strain>168 / SHGW</strain>
    </source>
</reference>
<reference key="2">
    <citation type="journal article" date="1993" name="Mol. Microbiol.">
        <title>The organization of the Bacillus subtilis 168 chromosome region between the spoVA and serA genetic loci, based on sequence data.</title>
        <authorList>
            <person name="Sorokin A.V."/>
            <person name="Zumstein E."/>
            <person name="Azevedo V."/>
            <person name="Ehrlich S.D."/>
            <person name="Serror P."/>
        </authorList>
    </citation>
    <scope>NUCLEOTIDE SEQUENCE [GENOMIC DNA]</scope>
    <source>
        <strain>168 / Marburg / ATCC 6051 / DSM 10 / JCM 1465 / NBRC 13719 / NCIMB 3610 / NRRL NRS-744 / VKM B-501</strain>
    </source>
</reference>
<reference key="3">
    <citation type="journal article" date="1997" name="Nature">
        <title>The complete genome sequence of the Gram-positive bacterium Bacillus subtilis.</title>
        <authorList>
            <person name="Kunst F."/>
            <person name="Ogasawara N."/>
            <person name="Moszer I."/>
            <person name="Albertini A.M."/>
            <person name="Alloni G."/>
            <person name="Azevedo V."/>
            <person name="Bertero M.G."/>
            <person name="Bessieres P."/>
            <person name="Bolotin A."/>
            <person name="Borchert S."/>
            <person name="Borriss R."/>
            <person name="Boursier L."/>
            <person name="Brans A."/>
            <person name="Braun M."/>
            <person name="Brignell S.C."/>
            <person name="Bron S."/>
            <person name="Brouillet S."/>
            <person name="Bruschi C.V."/>
            <person name="Caldwell B."/>
            <person name="Capuano V."/>
            <person name="Carter N.M."/>
            <person name="Choi S.-K."/>
            <person name="Codani J.-J."/>
            <person name="Connerton I.F."/>
            <person name="Cummings N.J."/>
            <person name="Daniel R.A."/>
            <person name="Denizot F."/>
            <person name="Devine K.M."/>
            <person name="Duesterhoeft A."/>
            <person name="Ehrlich S.D."/>
            <person name="Emmerson P.T."/>
            <person name="Entian K.-D."/>
            <person name="Errington J."/>
            <person name="Fabret C."/>
            <person name="Ferrari E."/>
            <person name="Foulger D."/>
            <person name="Fritz C."/>
            <person name="Fujita M."/>
            <person name="Fujita Y."/>
            <person name="Fuma S."/>
            <person name="Galizzi A."/>
            <person name="Galleron N."/>
            <person name="Ghim S.-Y."/>
            <person name="Glaser P."/>
            <person name="Goffeau A."/>
            <person name="Golightly E.J."/>
            <person name="Grandi G."/>
            <person name="Guiseppi G."/>
            <person name="Guy B.J."/>
            <person name="Haga K."/>
            <person name="Haiech J."/>
            <person name="Harwood C.R."/>
            <person name="Henaut A."/>
            <person name="Hilbert H."/>
            <person name="Holsappel S."/>
            <person name="Hosono S."/>
            <person name="Hullo M.-F."/>
            <person name="Itaya M."/>
            <person name="Jones L.-M."/>
            <person name="Joris B."/>
            <person name="Karamata D."/>
            <person name="Kasahara Y."/>
            <person name="Klaerr-Blanchard M."/>
            <person name="Klein C."/>
            <person name="Kobayashi Y."/>
            <person name="Koetter P."/>
            <person name="Koningstein G."/>
            <person name="Krogh S."/>
            <person name="Kumano M."/>
            <person name="Kurita K."/>
            <person name="Lapidus A."/>
            <person name="Lardinois S."/>
            <person name="Lauber J."/>
            <person name="Lazarevic V."/>
            <person name="Lee S.-M."/>
            <person name="Levine A."/>
            <person name="Liu H."/>
            <person name="Masuda S."/>
            <person name="Mauel C."/>
            <person name="Medigue C."/>
            <person name="Medina N."/>
            <person name="Mellado R.P."/>
            <person name="Mizuno M."/>
            <person name="Moestl D."/>
            <person name="Nakai S."/>
            <person name="Noback M."/>
            <person name="Noone D."/>
            <person name="O'Reilly M."/>
            <person name="Ogawa K."/>
            <person name="Ogiwara A."/>
            <person name="Oudega B."/>
            <person name="Park S.-H."/>
            <person name="Parro V."/>
            <person name="Pohl T.M."/>
            <person name="Portetelle D."/>
            <person name="Porwollik S."/>
            <person name="Prescott A.M."/>
            <person name="Presecan E."/>
            <person name="Pujic P."/>
            <person name="Purnelle B."/>
            <person name="Rapoport G."/>
            <person name="Rey M."/>
            <person name="Reynolds S."/>
            <person name="Rieger M."/>
            <person name="Rivolta C."/>
            <person name="Rocha E."/>
            <person name="Roche B."/>
            <person name="Rose M."/>
            <person name="Sadaie Y."/>
            <person name="Sato T."/>
            <person name="Scanlan E."/>
            <person name="Schleich S."/>
            <person name="Schroeter R."/>
            <person name="Scoffone F."/>
            <person name="Sekiguchi J."/>
            <person name="Sekowska A."/>
            <person name="Seror S.J."/>
            <person name="Serror P."/>
            <person name="Shin B.-S."/>
            <person name="Soldo B."/>
            <person name="Sorokin A."/>
            <person name="Tacconi E."/>
            <person name="Takagi T."/>
            <person name="Takahashi H."/>
            <person name="Takemaru K."/>
            <person name="Takeuchi M."/>
            <person name="Tamakoshi A."/>
            <person name="Tanaka T."/>
            <person name="Terpstra P."/>
            <person name="Tognoni A."/>
            <person name="Tosato V."/>
            <person name="Uchiyama S."/>
            <person name="Vandenbol M."/>
            <person name="Vannier F."/>
            <person name="Vassarotti A."/>
            <person name="Viari A."/>
            <person name="Wambutt R."/>
            <person name="Wedler E."/>
            <person name="Wedler H."/>
            <person name="Weitzenegger T."/>
            <person name="Winters P."/>
            <person name="Wipat A."/>
            <person name="Yamamoto H."/>
            <person name="Yamane K."/>
            <person name="Yasumoto K."/>
            <person name="Yata K."/>
            <person name="Yoshida K."/>
            <person name="Yoshikawa H.-F."/>
            <person name="Zumstein E."/>
            <person name="Yoshikawa H."/>
            <person name="Danchin A."/>
        </authorList>
    </citation>
    <scope>NUCLEOTIDE SEQUENCE [LARGE SCALE GENOMIC DNA]</scope>
    <source>
        <strain>168</strain>
    </source>
</reference>
<reference key="4">
    <citation type="journal article" date="1990" name="Mol. Biol. (Mosk.)">
        <title>Unusual structure of the regulatory region of the riboflavin biosynthesis operon in Bacillus subtilis.</title>
        <authorList>
            <person name="Mironov V.N."/>
            <person name="Perumov D.A."/>
            <person name="Kraev A.S."/>
            <person name="Stepanov A.I."/>
            <person name="Skriabin K.G."/>
        </authorList>
    </citation>
    <scope>NUCLEOTIDE SEQUENCE [GENOMIC DNA] OF 1-12</scope>
    <source>
        <strain>168 / SHGW</strain>
    </source>
</reference>
<reference key="5">
    <citation type="journal article" date="1997" name="J. Bacteriol.">
        <title>Biosynthesis of riboflavin: characterization of the bifunctional deaminase-reductase of Escherichia coli and Bacillus subtilis.</title>
        <authorList>
            <person name="Richter G."/>
            <person name="Fischer M."/>
            <person name="Krieger C."/>
            <person name="Eberhardt S."/>
            <person name="Luttgen H."/>
            <person name="Gerstenschlager I."/>
            <person name="Bacher A."/>
        </authorList>
    </citation>
    <scope>CHARACTERIZATION</scope>
</reference>
<reference key="6">
    <citation type="journal article" date="2006" name="J. Biol. Chem.">
        <title>Crystal structure of a bifunctional deaminase and reductase from Bacillus subtilis involved in riboflavin biosynthesis.</title>
        <authorList>
            <person name="Chen S.-C."/>
            <person name="Chang Y.-C."/>
            <person name="Lin C.-H."/>
            <person name="Lin C.-H."/>
            <person name="Liaw S.-H."/>
        </authorList>
    </citation>
    <scope>X-RAY CRYSTALLOGRAPHY (2.41 ANGSTROMS) IN COMPLEXES WITH ZINC AND NADP</scope>
    <scope>COFACTOR</scope>
    <scope>SUBUNIT</scope>
</reference>
<sequence length="361" mass="39305">MEEYYMKLALDLAKQGEGQTESNPLVGAVVVKDGQIVGMGAHLKYGEAHAEVHAIHMAGAHAEGADIYVTLEPCSHYGKTPPCAELIINSGIKRVFVAMRDPNPLVAGRGISMMKEAGIEVREGILADQAERLNEKFLHFMRTGLPYVTLKAAASLDGKIATSTGDSKWITSEAARQDAQQYRKTHQSILVGVGTVKADNPSLTCRLPNVTKQPVRVILDTVLSIPEDAKVICDQIAPTWIFTTARADEEKKKRLSAFGVNIFTLETERIQIPDVLKILAEEGIMSVYVEGGSAVHGSFVKEGCFQEIIFYFAPKLIGGTHAPSLISGEGFQSMKDVPLLQFTDITQIGRDIKLTAKPTKE</sequence>
<accession>P17618</accession>
<protein>
    <recommendedName>
        <fullName>Riboflavin biosynthesis protein RibD</fullName>
    </recommendedName>
    <domain>
        <recommendedName>
            <fullName>Diaminohydroxyphosphoribosylaminopyrimidine deaminase</fullName>
            <shortName>DRAP deaminase</shortName>
            <ecNumber>3.5.4.26</ecNumber>
        </recommendedName>
        <alternativeName>
            <fullName>Riboflavin-specific deaminase</fullName>
        </alternativeName>
    </domain>
    <domain>
        <recommendedName>
            <fullName>5-amino-6-(5-phosphoribosylamino)uracil reductase</fullName>
            <ecNumber>1.1.1.193</ecNumber>
        </recommendedName>
        <alternativeName>
            <fullName>HTP reductase</fullName>
        </alternativeName>
    </domain>
</protein>
<comment type="function">
    <text>Converts 2,5-diamino-6-(ribosylamino)-4(3h)-pyrimidinone 5'-phosphate into 5-amino-6-(ribosylamino)-2,4(1h,3h)-pyrimidinedione 5'-phosphate.</text>
</comment>
<comment type="catalytic activity">
    <reaction>
        <text>2,5-diamino-6-hydroxy-4-(5-phosphoribosylamino)-pyrimidine + H2O + H(+) = 5-amino-6-(5-phospho-D-ribosylamino)uracil + NH4(+)</text>
        <dbReference type="Rhea" id="RHEA:21868"/>
        <dbReference type="ChEBI" id="CHEBI:15377"/>
        <dbReference type="ChEBI" id="CHEBI:15378"/>
        <dbReference type="ChEBI" id="CHEBI:28938"/>
        <dbReference type="ChEBI" id="CHEBI:58453"/>
        <dbReference type="ChEBI" id="CHEBI:58614"/>
        <dbReference type="EC" id="3.5.4.26"/>
    </reaction>
</comment>
<comment type="catalytic activity">
    <reaction>
        <text>5-amino-6-(5-phospho-D-ribitylamino)uracil + NADP(+) = 5-amino-6-(5-phospho-D-ribosylamino)uracil + NADPH + H(+)</text>
        <dbReference type="Rhea" id="RHEA:17845"/>
        <dbReference type="ChEBI" id="CHEBI:15378"/>
        <dbReference type="ChEBI" id="CHEBI:57783"/>
        <dbReference type="ChEBI" id="CHEBI:58349"/>
        <dbReference type="ChEBI" id="CHEBI:58421"/>
        <dbReference type="ChEBI" id="CHEBI:58453"/>
        <dbReference type="EC" id="1.1.1.193"/>
    </reaction>
</comment>
<comment type="cofactor">
    <cofactor evidence="3">
        <name>Zn(2+)</name>
        <dbReference type="ChEBI" id="CHEBI:29105"/>
    </cofactor>
    <text evidence="3">Binds 1 zinc ion.</text>
</comment>
<comment type="pathway">
    <text>Cofactor biosynthesis; riboflavin biosynthesis; 5-amino-6-(D-ribitylamino)uracil from GTP: step 2/4.</text>
</comment>
<comment type="pathway">
    <text>Cofactor biosynthesis; riboflavin biosynthesis; 5-amino-6-(D-ribitylamino)uracil from GTP: step 3/4.</text>
</comment>
<comment type="subunit">
    <text evidence="3">Homotetramer.</text>
</comment>
<comment type="similarity">
    <text evidence="4">In the N-terminal section; belongs to the cytidine and deoxycytidylate deaminase family.</text>
</comment>
<comment type="similarity">
    <text evidence="4">In the C-terminal section; belongs to the HTP reductase family.</text>
</comment>
<feature type="chain" id="PRO_0000171715" description="Riboflavin biosynthesis protein RibD">
    <location>
        <begin position="1"/>
        <end position="361"/>
    </location>
</feature>
<feature type="domain" description="CMP/dCMP-type deaminase" evidence="2">
    <location>
        <begin position="1"/>
        <end position="122"/>
    </location>
</feature>
<feature type="region of interest" description="Deaminase">
    <location>
        <begin position="1"/>
        <end position="144"/>
    </location>
</feature>
<feature type="region of interest" description="Reductase">
    <location>
        <begin position="145"/>
        <end position="361"/>
    </location>
</feature>
<feature type="active site" description="Proton donor" evidence="1">
    <location>
        <position position="51"/>
    </location>
</feature>
<feature type="binding site">
    <location>
        <position position="49"/>
    </location>
    <ligand>
        <name>Zn(2+)</name>
        <dbReference type="ChEBI" id="CHEBI:29105"/>
        <note>catalytic</note>
    </ligand>
</feature>
<feature type="binding site">
    <location>
        <position position="74"/>
    </location>
    <ligand>
        <name>Zn(2+)</name>
        <dbReference type="ChEBI" id="CHEBI:29105"/>
        <note>catalytic</note>
    </ligand>
</feature>
<feature type="binding site">
    <location>
        <position position="83"/>
    </location>
    <ligand>
        <name>Zn(2+)</name>
        <dbReference type="ChEBI" id="CHEBI:29105"/>
        <note>catalytic</note>
    </ligand>
</feature>
<feature type="binding site">
    <location>
        <position position="153"/>
    </location>
    <ligand>
        <name>NADP(+)</name>
        <dbReference type="ChEBI" id="CHEBI:58349"/>
    </ligand>
</feature>
<feature type="binding site" evidence="1">
    <location>
        <position position="167"/>
    </location>
    <ligand>
        <name>substrate</name>
    </ligand>
</feature>
<feature type="binding site">
    <location>
        <position position="169"/>
    </location>
    <ligand>
        <name>NADP(+)</name>
        <dbReference type="ChEBI" id="CHEBI:58349"/>
    </ligand>
</feature>
<feature type="binding site" evidence="1">
    <location>
        <position position="183"/>
    </location>
    <ligand>
        <name>substrate</name>
    </ligand>
</feature>
<feature type="binding site">
    <location>
        <position position="195"/>
    </location>
    <ligand>
        <name>NADP(+)</name>
        <dbReference type="ChEBI" id="CHEBI:58349"/>
    </ligand>
</feature>
<feature type="binding site">
    <location>
        <position position="199"/>
    </location>
    <ligand>
        <name>NADP(+)</name>
        <dbReference type="ChEBI" id="CHEBI:58349"/>
    </ligand>
</feature>
<feature type="binding site" evidence="1">
    <location>
        <position position="203"/>
    </location>
    <ligand>
        <name>substrate</name>
    </ligand>
</feature>
<feature type="binding site" evidence="1">
    <location>
        <position position="206"/>
    </location>
    <ligand>
        <name>substrate</name>
    </ligand>
</feature>
<feature type="binding site">
    <location>
        <position position="221"/>
    </location>
    <ligand>
        <name>NADP(+)</name>
        <dbReference type="ChEBI" id="CHEBI:58349"/>
    </ligand>
</feature>
<feature type="binding site" evidence="1">
    <location>
        <position position="290"/>
    </location>
    <ligand>
        <name>substrate</name>
    </ligand>
</feature>
<feature type="binding site">
    <location>
        <begin position="292"/>
        <end position="298"/>
    </location>
    <ligand>
        <name>NADP(+)</name>
        <dbReference type="ChEBI" id="CHEBI:58349"/>
    </ligand>
</feature>
<feature type="helix" evidence="5">
    <location>
        <begin position="2"/>
        <end position="13"/>
    </location>
</feature>
<feature type="helix" evidence="5">
    <location>
        <begin position="14"/>
        <end position="16"/>
    </location>
</feature>
<feature type="strand" evidence="6">
    <location>
        <begin position="19"/>
        <end position="23"/>
    </location>
</feature>
<feature type="strand" evidence="5">
    <location>
        <begin position="27"/>
        <end position="41"/>
    </location>
</feature>
<feature type="helix" evidence="5">
    <location>
        <begin position="50"/>
        <end position="58"/>
    </location>
</feature>
<feature type="helix" evidence="5">
    <location>
        <begin position="59"/>
        <end position="62"/>
    </location>
</feature>
<feature type="strand" evidence="5">
    <location>
        <begin position="66"/>
        <end position="71"/>
    </location>
</feature>
<feature type="strand" evidence="5">
    <location>
        <begin position="78"/>
        <end position="80"/>
    </location>
</feature>
<feature type="helix" evidence="5">
    <location>
        <begin position="83"/>
        <end position="90"/>
    </location>
</feature>
<feature type="strand" evidence="5">
    <location>
        <begin position="94"/>
        <end position="99"/>
    </location>
</feature>
<feature type="turn" evidence="5">
    <location>
        <begin position="104"/>
        <end position="108"/>
    </location>
</feature>
<feature type="helix" evidence="5">
    <location>
        <begin position="109"/>
        <end position="115"/>
    </location>
</feature>
<feature type="turn" evidence="5">
    <location>
        <begin position="116"/>
        <end position="118"/>
    </location>
</feature>
<feature type="strand" evidence="5">
    <location>
        <begin position="120"/>
        <end position="123"/>
    </location>
</feature>
<feature type="helix" evidence="5">
    <location>
        <begin position="127"/>
        <end position="133"/>
    </location>
</feature>
<feature type="helix" evidence="5">
    <location>
        <begin position="135"/>
        <end position="143"/>
    </location>
</feature>
<feature type="strand" evidence="5">
    <location>
        <begin position="147"/>
        <end position="155"/>
    </location>
</feature>
<feature type="strand" evidence="5">
    <location>
        <begin position="158"/>
        <end position="161"/>
    </location>
</feature>
<feature type="helix" evidence="5">
    <location>
        <begin position="173"/>
        <end position="179"/>
    </location>
</feature>
<feature type="helix" evidence="5">
    <location>
        <begin position="182"/>
        <end position="185"/>
    </location>
</feature>
<feature type="strand" evidence="5">
    <location>
        <begin position="186"/>
        <end position="192"/>
    </location>
</feature>
<feature type="helix" evidence="5">
    <location>
        <begin position="193"/>
        <end position="199"/>
    </location>
</feature>
<feature type="strand" evidence="7">
    <location>
        <begin position="207"/>
        <end position="209"/>
    </location>
</feature>
<feature type="strand" evidence="5">
    <location>
        <begin position="215"/>
        <end position="219"/>
    </location>
</feature>
<feature type="helix" evidence="5">
    <location>
        <begin position="230"/>
        <end position="233"/>
    </location>
</feature>
<feature type="strand" evidence="5">
    <location>
        <begin position="239"/>
        <end position="243"/>
    </location>
</feature>
<feature type="helix" evidence="5">
    <location>
        <begin position="249"/>
        <end position="256"/>
    </location>
</feature>
<feature type="turn" evidence="5">
    <location>
        <begin position="257"/>
        <end position="259"/>
    </location>
</feature>
<feature type="strand" evidence="5">
    <location>
        <begin position="261"/>
        <end position="264"/>
    </location>
</feature>
<feature type="strand" evidence="5">
    <location>
        <begin position="266"/>
        <end position="269"/>
    </location>
</feature>
<feature type="helix" evidence="5">
    <location>
        <begin position="272"/>
        <end position="281"/>
    </location>
</feature>
<feature type="strand" evidence="5">
    <location>
        <begin position="286"/>
        <end position="291"/>
    </location>
</feature>
<feature type="helix" evidence="5">
    <location>
        <begin position="293"/>
        <end position="302"/>
    </location>
</feature>
<feature type="strand" evidence="5">
    <location>
        <begin position="306"/>
        <end position="315"/>
    </location>
</feature>
<feature type="strand" evidence="5">
    <location>
        <begin position="320"/>
        <end position="322"/>
    </location>
</feature>
<feature type="strand" evidence="5">
    <location>
        <begin position="324"/>
        <end position="326"/>
    </location>
</feature>
<feature type="turn" evidence="7">
    <location>
        <begin position="334"/>
        <end position="336"/>
    </location>
</feature>
<feature type="strand" evidence="5">
    <location>
        <begin position="339"/>
        <end position="348"/>
    </location>
</feature>
<feature type="strand" evidence="5">
    <location>
        <begin position="351"/>
        <end position="358"/>
    </location>
</feature>
<name>RIBD_BACSU</name>
<keyword id="KW-0002">3D-structure</keyword>
<keyword id="KW-0378">Hydrolase</keyword>
<keyword id="KW-0479">Metal-binding</keyword>
<keyword id="KW-0511">Multifunctional enzyme</keyword>
<keyword id="KW-0521">NADP</keyword>
<keyword id="KW-0560">Oxidoreductase</keyword>
<keyword id="KW-1185">Reference proteome</keyword>
<keyword id="KW-0686">Riboflavin biosynthesis</keyword>
<keyword id="KW-0862">Zinc</keyword>
<evidence type="ECO:0000250" key="1"/>
<evidence type="ECO:0000255" key="2">
    <source>
        <dbReference type="PROSITE-ProRule" id="PRU01083"/>
    </source>
</evidence>
<evidence type="ECO:0000269" key="3">
    <source>
    </source>
</evidence>
<evidence type="ECO:0000305" key="4"/>
<evidence type="ECO:0007829" key="5">
    <source>
        <dbReference type="PDB" id="2B3Z"/>
    </source>
</evidence>
<evidence type="ECO:0007829" key="6">
    <source>
        <dbReference type="PDB" id="2D5N"/>
    </source>
</evidence>
<evidence type="ECO:0007829" key="7">
    <source>
        <dbReference type="PDB" id="3EX8"/>
    </source>
</evidence>